<gene>
    <name type="ordered locus">SAUSA300_0205</name>
</gene>
<protein>
    <recommendedName>
        <fullName>Uncharacterized protein SAUSA300_0205</fullName>
    </recommendedName>
</protein>
<proteinExistence type="inferred from homology"/>
<reference key="1">
    <citation type="journal article" date="2006" name="Lancet">
        <title>Complete genome sequence of USA300, an epidemic clone of community-acquired meticillin-resistant Staphylococcus aureus.</title>
        <authorList>
            <person name="Diep B.A."/>
            <person name="Gill S.R."/>
            <person name="Chang R.F."/>
            <person name="Phan T.H."/>
            <person name="Chen J.H."/>
            <person name="Davidson M.G."/>
            <person name="Lin F."/>
            <person name="Lin J."/>
            <person name="Carleton H.A."/>
            <person name="Mongodin E.F."/>
            <person name="Sensabaugh G.F."/>
            <person name="Perdreau-Remington F."/>
        </authorList>
    </citation>
    <scope>NUCLEOTIDE SEQUENCE [LARGE SCALE GENOMIC DNA]</scope>
    <source>
        <strain>USA300</strain>
    </source>
</reference>
<sequence length="257" mass="29649">MKAHKIFWLNLAAIIIISIVVSGDMFLAMKWEQIHLKDGLKKVLSTYPIKNLETLYEIDGHDNPHYENNDQDTWYIESSYSVVGSDELLKEDRMLLKVDKNTHKITGEYDTTTNDKKNATDSTYKSYPVKVVNNKIVFTKDVKDPALKQKIENNQFLIQSGDLTSILNSNDLKVTHDPTTDYYNLSGKLSNDNPNVKQLKRRYNIPKNASTKVELKGMSDLKGNNHQDQKLYFYFSSPGKDQIIYKESLTYNKISEH</sequence>
<organism>
    <name type="scientific">Staphylococcus aureus (strain USA300)</name>
    <dbReference type="NCBI Taxonomy" id="367830"/>
    <lineage>
        <taxon>Bacteria</taxon>
        <taxon>Bacillati</taxon>
        <taxon>Bacillota</taxon>
        <taxon>Bacilli</taxon>
        <taxon>Bacillales</taxon>
        <taxon>Staphylococcaceae</taxon>
        <taxon>Staphylococcus</taxon>
    </lineage>
</organism>
<evidence type="ECO:0000255" key="1"/>
<evidence type="ECO:0000305" key="2"/>
<dbReference type="EMBL" id="CP000255">
    <property type="protein sequence ID" value="ABD21781.1"/>
    <property type="molecule type" value="Genomic_DNA"/>
</dbReference>
<dbReference type="RefSeq" id="WP_000643615.1">
    <property type="nucleotide sequence ID" value="NZ_CP027476.1"/>
</dbReference>
<dbReference type="SMR" id="Q2FK59"/>
<dbReference type="KEGG" id="saa:SAUSA300_0205"/>
<dbReference type="HOGENOM" id="CLU_071589_0_1_9"/>
<dbReference type="OMA" id="HSTHKSY"/>
<dbReference type="Proteomes" id="UP000001939">
    <property type="component" value="Chromosome"/>
</dbReference>
<dbReference type="GO" id="GO:0005886">
    <property type="term" value="C:plasma membrane"/>
    <property type="evidence" value="ECO:0007669"/>
    <property type="project" value="UniProtKB-SubCell"/>
</dbReference>
<dbReference type="Gene3D" id="2.50.20.40">
    <property type="match status" value="1"/>
</dbReference>
<dbReference type="InterPro" id="IPR007595">
    <property type="entry name" value="Csa"/>
</dbReference>
<dbReference type="InterPro" id="IPR038641">
    <property type="entry name" value="Csa_sf"/>
</dbReference>
<dbReference type="NCBIfam" id="TIGR01742">
    <property type="entry name" value="SA_tandem_lipo"/>
    <property type="match status" value="1"/>
</dbReference>
<dbReference type="Pfam" id="PF04507">
    <property type="entry name" value="DUF576"/>
    <property type="match status" value="1"/>
</dbReference>
<accession>Q2FK59</accession>
<comment type="subcellular location">
    <subcellularLocation>
        <location evidence="2">Cell membrane</location>
        <topology evidence="2">Single-pass membrane protein</topology>
    </subcellularLocation>
</comment>
<comment type="similarity">
    <text evidence="2">Belongs to the staphylococcal tandem lipoprotein family.</text>
</comment>
<name>Y205_STAA3</name>
<keyword id="KW-1003">Cell membrane</keyword>
<keyword id="KW-0472">Membrane</keyword>
<keyword id="KW-0812">Transmembrane</keyword>
<keyword id="KW-1133">Transmembrane helix</keyword>
<feature type="chain" id="PRO_0000282072" description="Uncharacterized protein SAUSA300_0205">
    <location>
        <begin position="1"/>
        <end position="257"/>
    </location>
</feature>
<feature type="transmembrane region" description="Helical" evidence="1">
    <location>
        <begin position="6"/>
        <end position="26"/>
    </location>
</feature>